<proteinExistence type="evidence at protein level"/>
<name>5HT4R_HUMAN</name>
<dbReference type="EMBL" id="Y08756">
    <property type="protein sequence ID" value="CAA70002.1"/>
    <property type="molecule type" value="mRNA"/>
</dbReference>
<dbReference type="EMBL" id="Y12505">
    <property type="protein sequence ID" value="CAA73107.1"/>
    <property type="molecule type" value="mRNA"/>
</dbReference>
<dbReference type="EMBL" id="Y12506">
    <property type="protein sequence ID" value="CAA73108.1"/>
    <property type="molecule type" value="mRNA"/>
</dbReference>
<dbReference type="EMBL" id="Y12507">
    <property type="protein sequence ID" value="CAA73109.1"/>
    <property type="molecule type" value="mRNA"/>
</dbReference>
<dbReference type="EMBL" id="Y10437">
    <property type="protein sequence ID" value="CAA71462.1"/>
    <property type="molecule type" value="mRNA"/>
</dbReference>
<dbReference type="EMBL" id="Y13584">
    <property type="protein sequence ID" value="CAA73911.1"/>
    <property type="molecule type" value="mRNA"/>
</dbReference>
<dbReference type="EMBL" id="Y09586">
    <property type="protein sequence ID" value="CAA70774.1"/>
    <property type="molecule type" value="mRNA"/>
</dbReference>
<dbReference type="EMBL" id="AJ131724">
    <property type="protein sequence ID" value="CAC20411.1"/>
    <property type="molecule type" value="mRNA"/>
</dbReference>
<dbReference type="EMBL" id="AJ011371">
    <property type="protein sequence ID" value="CAA09600.1"/>
    <property type="molecule type" value="mRNA"/>
</dbReference>
<dbReference type="EMBL" id="AJ278979">
    <property type="protein sequence ID" value="CAC22248.1"/>
    <property type="molecule type" value="mRNA"/>
</dbReference>
<dbReference type="EMBL" id="AJ278980">
    <property type="protein sequence ID" value="CAC22249.1"/>
    <property type="molecule type" value="mRNA"/>
</dbReference>
<dbReference type="EMBL" id="AJ278981">
    <property type="protein sequence ID" value="CAC22250.1"/>
    <property type="molecule type" value="mRNA"/>
</dbReference>
<dbReference type="EMBL" id="AJ278982">
    <property type="protein sequence ID" value="CAC22251.1"/>
    <property type="molecule type" value="mRNA"/>
</dbReference>
<dbReference type="EMBL" id="AJ131725">
    <property type="protein sequence ID" value="CAC79533.1"/>
    <property type="molecule type" value="mRNA"/>
</dbReference>
<dbReference type="EMBL" id="AJ131726">
    <property type="protein sequence ID" value="CAC79538.1"/>
    <property type="molecule type" value="mRNA"/>
</dbReference>
<dbReference type="EMBL" id="AJ633645">
    <property type="protein sequence ID" value="CAG17627.1"/>
    <property type="molecule type" value="mRNA"/>
</dbReference>
<dbReference type="EMBL" id="AM712912">
    <property type="protein sequence ID" value="CAN84676.1"/>
    <property type="molecule type" value="mRNA"/>
</dbReference>
<dbReference type="EMBL" id="AC008627">
    <property type="status" value="NOT_ANNOTATED_CDS"/>
    <property type="molecule type" value="Genomic_DNA"/>
</dbReference>
<dbReference type="EMBL" id="AC011390">
    <property type="status" value="NOT_ANNOTATED_CDS"/>
    <property type="molecule type" value="Genomic_DNA"/>
</dbReference>
<dbReference type="EMBL" id="AC091971">
    <property type="status" value="NOT_ANNOTATED_CDS"/>
    <property type="molecule type" value="Genomic_DNA"/>
</dbReference>
<dbReference type="EMBL" id="AC114939">
    <property type="status" value="NOT_ANNOTATED_CDS"/>
    <property type="molecule type" value="Genomic_DNA"/>
</dbReference>
<dbReference type="EMBL" id="CH471062">
    <property type="protein sequence ID" value="EAW61800.1"/>
    <property type="molecule type" value="Genomic_DNA"/>
</dbReference>
<dbReference type="EMBL" id="CH471062">
    <property type="protein sequence ID" value="EAW61801.1"/>
    <property type="molecule type" value="Genomic_DNA"/>
</dbReference>
<dbReference type="EMBL" id="CH471062">
    <property type="protein sequence ID" value="EAW61804.1"/>
    <property type="molecule type" value="Genomic_DNA"/>
</dbReference>
<dbReference type="EMBL" id="BC074755">
    <property type="protein sequence ID" value="AAH74755.1"/>
    <property type="molecule type" value="mRNA"/>
</dbReference>
<dbReference type="EMBL" id="BC095497">
    <property type="protein sequence ID" value="AAH95497.1"/>
    <property type="molecule type" value="mRNA"/>
</dbReference>
<dbReference type="EMBL" id="AJ243213">
    <property type="protein sequence ID" value="CAB71316.1"/>
    <property type="molecule type" value="Genomic_DNA"/>
</dbReference>
<dbReference type="EMBL" id="Z48150">
    <property type="protein sequence ID" value="CAA88167.1"/>
    <property type="molecule type" value="mRNA"/>
</dbReference>
<dbReference type="CCDS" id="CCDS34270.1">
    <molecule id="Q13639-2"/>
</dbReference>
<dbReference type="CCDS" id="CCDS34271.1">
    <molecule id="Q13639-5"/>
</dbReference>
<dbReference type="CCDS" id="CCDS34272.1">
    <molecule id="Q13639-8"/>
</dbReference>
<dbReference type="CCDS" id="CCDS34273.2">
    <molecule id="Q13639-3"/>
</dbReference>
<dbReference type="CCDS" id="CCDS4291.1">
    <molecule id="Q13639-1"/>
</dbReference>
<dbReference type="CCDS" id="CCDS75353.1">
    <molecule id="Q13639-9"/>
</dbReference>
<dbReference type="PIR" id="S66493">
    <property type="entry name" value="S66493"/>
</dbReference>
<dbReference type="RefSeq" id="NP_000861.1">
    <molecule id="Q13639-1"/>
    <property type="nucleotide sequence ID" value="NM_000870.7"/>
</dbReference>
<dbReference type="RefSeq" id="NP_001035259.1">
    <molecule id="Q13639-2"/>
    <property type="nucleotide sequence ID" value="NM_001040169.2"/>
</dbReference>
<dbReference type="RefSeq" id="NP_001035262.2">
    <molecule id="Q13639-3"/>
    <property type="nucleotide sequence ID" value="NM_001040172.2"/>
</dbReference>
<dbReference type="RefSeq" id="NP_001035263.1">
    <molecule id="Q13639-8"/>
    <property type="nucleotide sequence ID" value="NM_001040173.2"/>
</dbReference>
<dbReference type="RefSeq" id="NP_001273339.1">
    <molecule id="Q13639-9"/>
    <property type="nucleotide sequence ID" value="NM_001286410.1"/>
</dbReference>
<dbReference type="RefSeq" id="NP_955525.1">
    <molecule id="Q13639-5"/>
    <property type="nucleotide sequence ID" value="NM_199453.3"/>
</dbReference>
<dbReference type="PDB" id="5EM9">
    <property type="method" value="X-ray"/>
    <property type="resolution" value="1.60 A"/>
    <property type="chains" value="B=264-268"/>
</dbReference>
<dbReference type="PDB" id="7XT8">
    <property type="method" value="EM"/>
    <property type="resolution" value="3.10 A"/>
    <property type="chains" value="R=2-388"/>
</dbReference>
<dbReference type="PDB" id="7XT9">
    <property type="method" value="EM"/>
    <property type="resolution" value="3.20 A"/>
    <property type="chains" value="R=2-388"/>
</dbReference>
<dbReference type="PDB" id="7XTA">
    <property type="method" value="EM"/>
    <property type="resolution" value="3.20 A"/>
    <property type="chains" value="R=2-388"/>
</dbReference>
<dbReference type="PDBsum" id="5EM9"/>
<dbReference type="PDBsum" id="7XT8"/>
<dbReference type="PDBsum" id="7XT9"/>
<dbReference type="PDBsum" id="7XTA"/>
<dbReference type="EMDB" id="EMD-33442"/>
<dbReference type="EMDB" id="EMD-33443"/>
<dbReference type="EMDB" id="EMD-33444"/>
<dbReference type="SMR" id="Q13639"/>
<dbReference type="BioGRID" id="109592">
    <property type="interactions" value="17"/>
</dbReference>
<dbReference type="CORUM" id="Q13639"/>
<dbReference type="FunCoup" id="Q13639">
    <property type="interactions" value="1345"/>
</dbReference>
<dbReference type="IntAct" id="Q13639">
    <property type="interactions" value="17"/>
</dbReference>
<dbReference type="MINT" id="Q13639"/>
<dbReference type="STRING" id="9606.ENSP00000353915"/>
<dbReference type="BindingDB" id="Q13639"/>
<dbReference type="ChEMBL" id="CHEMBL1875"/>
<dbReference type="DrugBank" id="DB01239">
    <property type="generic name" value="Chlorprothixene"/>
</dbReference>
<dbReference type="DrugBank" id="DB08810">
    <property type="generic name" value="Cinitapride"/>
</dbReference>
<dbReference type="DrugBank" id="DB00604">
    <property type="generic name" value="Cisapride"/>
</dbReference>
<dbReference type="DrugBank" id="DB12853">
    <property type="generic name" value="DA-6886"/>
</dbReference>
<dbReference type="DrugBank" id="DB11273">
    <property type="generic name" value="Dihydroergocornine"/>
</dbReference>
<dbReference type="DrugBank" id="DB13345">
    <property type="generic name" value="Dihydroergocristine"/>
</dbReference>
<dbReference type="DrugBank" id="DB00320">
    <property type="generic name" value="Dihydroergotamine"/>
</dbReference>
<dbReference type="DrugBank" id="DB01049">
    <property type="generic name" value="Ergoloid mesylate"/>
</dbReference>
<dbReference type="DrugBank" id="DB12725">
    <property type="generic name" value="Felcisetrag"/>
</dbReference>
<dbReference type="DrugBank" id="DB12141">
    <property type="generic name" value="Gilteritinib"/>
</dbReference>
<dbReference type="DrugBank" id="DB01233">
    <property type="generic name" value="Metoclopramide"/>
</dbReference>
<dbReference type="DrugBank" id="DB11675">
    <property type="generic name" value="Mosapride"/>
</dbReference>
<dbReference type="DrugBank" id="DB05542">
    <property type="generic name" value="Naronapride"/>
</dbReference>
<dbReference type="DrugBank" id="DB00904">
    <property type="generic name" value="Ondansetron"/>
</dbReference>
<dbReference type="DrugBank" id="DB00715">
    <property type="generic name" value="Paroxetine"/>
</dbReference>
<dbReference type="DrugBank" id="DB12675">
    <property type="generic name" value="PF-04995274"/>
</dbReference>
<dbReference type="DrugBank" id="DB04873">
    <property type="generic name" value="Piboserod"/>
</dbReference>
<dbReference type="DrugBank" id="DB06480">
    <property type="generic name" value="Prucalopride"/>
</dbReference>
<dbReference type="DrugBank" id="DB12798">
    <property type="generic name" value="Relenopride"/>
</dbReference>
<dbReference type="DrugBank" id="DB04917">
    <property type="generic name" value="Renzapride"/>
</dbReference>
<dbReference type="DrugBank" id="DB08839">
    <property type="generic name" value="Serotonin"/>
</dbReference>
<dbReference type="DrugBank" id="DB09304">
    <property type="generic name" value="Setiptiline"/>
</dbReference>
<dbReference type="DrugBank" id="DB05905">
    <property type="generic name" value="TD-2749"/>
</dbReference>
<dbReference type="DrugBank" id="DB01079">
    <property type="generic name" value="Tegaserod"/>
</dbReference>
<dbReference type="DrugBank" id="DB13025">
    <property type="generic name" value="Tiapride"/>
</dbReference>
<dbReference type="DrugBank" id="DB06422">
    <property type="generic name" value="Ticalopride"/>
</dbReference>
<dbReference type="DrugBank" id="DB12702">
    <property type="generic name" value="Velusetrag"/>
</dbReference>
<dbReference type="DrugCentral" id="Q13639"/>
<dbReference type="GuidetoPHARMACOLOGY" id="9"/>
<dbReference type="TCDB" id="9.A.14.3.18">
    <property type="family name" value="the g-protein-coupled receptor (gpcr) family"/>
</dbReference>
<dbReference type="GlyCosmos" id="Q13639">
    <property type="glycosylation" value="1 site, No reported glycans"/>
</dbReference>
<dbReference type="GlyGen" id="Q13639">
    <property type="glycosylation" value="1 site"/>
</dbReference>
<dbReference type="iPTMnet" id="Q13639"/>
<dbReference type="PhosphoSitePlus" id="Q13639"/>
<dbReference type="SwissPalm" id="Q13639"/>
<dbReference type="BioMuta" id="HTR4"/>
<dbReference type="DMDM" id="12644029"/>
<dbReference type="jPOST" id="Q13639"/>
<dbReference type="MassIVE" id="Q13639"/>
<dbReference type="PaxDb" id="9606-ENSP00000353915"/>
<dbReference type="PeptideAtlas" id="Q13639"/>
<dbReference type="Antibodypedia" id="15936">
    <property type="antibodies" value="440 antibodies from 33 providers"/>
</dbReference>
<dbReference type="DNASU" id="3360"/>
<dbReference type="Ensembl" id="ENST00000360693.7">
    <molecule id="Q13639-8"/>
    <property type="protein sequence ID" value="ENSP00000353915.3"/>
    <property type="gene ID" value="ENSG00000164270.19"/>
</dbReference>
<dbReference type="Ensembl" id="ENST00000377888.8">
    <molecule id="Q13639-1"/>
    <property type="protein sequence ID" value="ENSP00000367120.4"/>
    <property type="gene ID" value="ENSG00000164270.19"/>
</dbReference>
<dbReference type="Ensembl" id="ENST00000517929.5">
    <molecule id="Q13639-3"/>
    <property type="protein sequence ID" value="ENSP00000435904.1"/>
    <property type="gene ID" value="ENSG00000164270.19"/>
</dbReference>
<dbReference type="Ensembl" id="ENST00000520514.5">
    <molecule id="Q13639-9"/>
    <property type="protein sequence ID" value="ENSP00000427913.1"/>
    <property type="gene ID" value="ENSG00000164270.19"/>
</dbReference>
<dbReference type="Ensembl" id="ENST00000521530.6">
    <molecule id="Q13639-2"/>
    <property type="protein sequence ID" value="ENSP00000428320.1"/>
    <property type="gene ID" value="ENSG00000164270.19"/>
</dbReference>
<dbReference type="Ensembl" id="ENST00000521735.5">
    <molecule id="Q13639-5"/>
    <property type="protein sequence ID" value="ENSP00000430979.1"/>
    <property type="gene ID" value="ENSG00000164270.19"/>
</dbReference>
<dbReference type="Ensembl" id="ENST00000522588.5">
    <molecule id="Q13639-5"/>
    <property type="protein sequence ID" value="ENSP00000430874.1"/>
    <property type="gene ID" value="ENSG00000164270.19"/>
</dbReference>
<dbReference type="GeneID" id="3360"/>
<dbReference type="KEGG" id="hsa:3360"/>
<dbReference type="MANE-Select" id="ENST00000377888.8">
    <property type="protein sequence ID" value="ENSP00000367120.4"/>
    <property type="RefSeq nucleotide sequence ID" value="NM_000870.7"/>
    <property type="RefSeq protein sequence ID" value="NP_000861.1"/>
</dbReference>
<dbReference type="UCSC" id="uc003lpn.5">
    <molecule id="Q13639-1"/>
    <property type="organism name" value="human"/>
</dbReference>
<dbReference type="AGR" id="HGNC:5299"/>
<dbReference type="CTD" id="3360"/>
<dbReference type="DisGeNET" id="3360"/>
<dbReference type="GeneCards" id="HTR4"/>
<dbReference type="HGNC" id="HGNC:5299">
    <property type="gene designation" value="HTR4"/>
</dbReference>
<dbReference type="HPA" id="ENSG00000164270">
    <property type="expression patterns" value="Group enriched (brain, heart muscle, intestine)"/>
</dbReference>
<dbReference type="MIM" id="602164">
    <property type="type" value="gene"/>
</dbReference>
<dbReference type="neXtProt" id="NX_Q13639"/>
<dbReference type="OpenTargets" id="ENSG00000164270"/>
<dbReference type="PharmGKB" id="PA29557"/>
<dbReference type="VEuPathDB" id="HostDB:ENSG00000164270"/>
<dbReference type="eggNOG" id="KOG3656">
    <property type="taxonomic scope" value="Eukaryota"/>
</dbReference>
<dbReference type="GeneTree" id="ENSGT00940000155983"/>
<dbReference type="HOGENOM" id="CLU_009579_11_0_1"/>
<dbReference type="InParanoid" id="Q13639"/>
<dbReference type="OMA" id="CRDRQLX"/>
<dbReference type="OrthoDB" id="5859976at2759"/>
<dbReference type="PAN-GO" id="Q13639">
    <property type="GO annotations" value="8 GO annotations based on evolutionary models"/>
</dbReference>
<dbReference type="PhylomeDB" id="Q13639"/>
<dbReference type="TreeFam" id="TF316350"/>
<dbReference type="PathwayCommons" id="Q13639"/>
<dbReference type="Reactome" id="R-HSA-390666">
    <property type="pathway name" value="Serotonin receptors"/>
</dbReference>
<dbReference type="Reactome" id="R-HSA-418555">
    <property type="pathway name" value="G alpha (s) signalling events"/>
</dbReference>
<dbReference type="SignaLink" id="Q13639"/>
<dbReference type="SIGNOR" id="Q13639"/>
<dbReference type="BioGRID-ORCS" id="3360">
    <property type="hits" value="12 hits in 1153 CRISPR screens"/>
</dbReference>
<dbReference type="ChiTaRS" id="HTR4">
    <property type="organism name" value="human"/>
</dbReference>
<dbReference type="GeneWiki" id="5-HT4_receptor"/>
<dbReference type="GenomeRNAi" id="3360"/>
<dbReference type="Pharos" id="Q13639">
    <property type="development level" value="Tclin"/>
</dbReference>
<dbReference type="PRO" id="PR:Q13639"/>
<dbReference type="Proteomes" id="UP000005640">
    <property type="component" value="Chromosome 5"/>
</dbReference>
<dbReference type="RNAct" id="Q13639">
    <property type="molecule type" value="protein"/>
</dbReference>
<dbReference type="Bgee" id="ENSG00000164270">
    <property type="expression patterns" value="Expressed in type B pancreatic cell and 181 other cell types or tissues"/>
</dbReference>
<dbReference type="ExpressionAtlas" id="Q13639">
    <property type="expression patterns" value="baseline and differential"/>
</dbReference>
<dbReference type="GO" id="GO:0005737">
    <property type="term" value="C:cytoplasm"/>
    <property type="evidence" value="ECO:0000314"/>
    <property type="project" value="UniProtKB"/>
</dbReference>
<dbReference type="GO" id="GO:0030425">
    <property type="term" value="C:dendrite"/>
    <property type="evidence" value="ECO:0000318"/>
    <property type="project" value="GO_Central"/>
</dbReference>
<dbReference type="GO" id="GO:0010008">
    <property type="term" value="C:endosome membrane"/>
    <property type="evidence" value="ECO:0007669"/>
    <property type="project" value="UniProtKB-SubCell"/>
</dbReference>
<dbReference type="GO" id="GO:0098978">
    <property type="term" value="C:glutamatergic synapse"/>
    <property type="evidence" value="ECO:0007669"/>
    <property type="project" value="Ensembl"/>
</dbReference>
<dbReference type="GO" id="GO:0016020">
    <property type="term" value="C:membrane"/>
    <property type="evidence" value="ECO:0000314"/>
    <property type="project" value="MGI"/>
</dbReference>
<dbReference type="GO" id="GO:0005886">
    <property type="term" value="C:plasma membrane"/>
    <property type="evidence" value="ECO:0000314"/>
    <property type="project" value="UniProtKB"/>
</dbReference>
<dbReference type="GO" id="GO:0098794">
    <property type="term" value="C:postsynapse"/>
    <property type="evidence" value="ECO:0007669"/>
    <property type="project" value="Ensembl"/>
</dbReference>
<dbReference type="GO" id="GO:0004993">
    <property type="term" value="F:G protein-coupled serotonin receptor activity"/>
    <property type="evidence" value="ECO:0000314"/>
    <property type="project" value="UniProtKB"/>
</dbReference>
<dbReference type="GO" id="GO:0030594">
    <property type="term" value="F:neurotransmitter receptor activity"/>
    <property type="evidence" value="ECO:0000318"/>
    <property type="project" value="GO_Central"/>
</dbReference>
<dbReference type="GO" id="GO:0051378">
    <property type="term" value="F:serotonin binding"/>
    <property type="evidence" value="ECO:0000318"/>
    <property type="project" value="GO_Central"/>
</dbReference>
<dbReference type="GO" id="GO:0099589">
    <property type="term" value="F:serotonin receptor activity"/>
    <property type="evidence" value="ECO:0000314"/>
    <property type="project" value="UniProt"/>
</dbReference>
<dbReference type="GO" id="GO:0007189">
    <property type="term" value="P:adenylate cyclase-activating G protein-coupled receptor signaling pathway"/>
    <property type="evidence" value="ECO:0000314"/>
    <property type="project" value="UniProtKB"/>
</dbReference>
<dbReference type="GO" id="GO:0007192">
    <property type="term" value="P:adenylate cyclase-activating serotonin receptor signaling pathway"/>
    <property type="evidence" value="ECO:0000314"/>
    <property type="project" value="UniProtKB"/>
</dbReference>
<dbReference type="GO" id="GO:0007198">
    <property type="term" value="P:adenylate cyclase-inhibiting serotonin receptor signaling pathway"/>
    <property type="evidence" value="ECO:0000318"/>
    <property type="project" value="GO_Central"/>
</dbReference>
<dbReference type="GO" id="GO:0007268">
    <property type="term" value="P:chemical synaptic transmission"/>
    <property type="evidence" value="ECO:0000318"/>
    <property type="project" value="GO_Central"/>
</dbReference>
<dbReference type="GO" id="GO:0007186">
    <property type="term" value="P:G protein-coupled receptor signaling pathway"/>
    <property type="evidence" value="ECO:0000304"/>
    <property type="project" value="ProtInc"/>
</dbReference>
<dbReference type="GO" id="GO:0007187">
    <property type="term" value="P:G protein-coupled receptor signaling pathway, coupled to cyclic nucleotide second messenger"/>
    <property type="evidence" value="ECO:0000318"/>
    <property type="project" value="GO_Central"/>
</dbReference>
<dbReference type="GO" id="GO:0120056">
    <property type="term" value="P:large intestinal transit"/>
    <property type="evidence" value="ECO:0000314"/>
    <property type="project" value="UniProt"/>
</dbReference>
<dbReference type="GO" id="GO:0030277">
    <property type="term" value="P:maintenance of gastrointestinal epithelium"/>
    <property type="evidence" value="ECO:0007669"/>
    <property type="project" value="Ensembl"/>
</dbReference>
<dbReference type="GO" id="GO:0070254">
    <property type="term" value="P:mucus secretion"/>
    <property type="evidence" value="ECO:0007669"/>
    <property type="project" value="Ensembl"/>
</dbReference>
<dbReference type="GO" id="GO:0032098">
    <property type="term" value="P:regulation of appetite"/>
    <property type="evidence" value="ECO:0007669"/>
    <property type="project" value="InterPro"/>
</dbReference>
<dbReference type="GO" id="GO:0150052">
    <property type="term" value="P:regulation of postsynapse assembly"/>
    <property type="evidence" value="ECO:0007669"/>
    <property type="project" value="Ensembl"/>
</dbReference>
<dbReference type="CDD" id="cd15056">
    <property type="entry name" value="7tmA_5-HT4"/>
    <property type="match status" value="1"/>
</dbReference>
<dbReference type="FunFam" id="1.20.1070.10:FF:000046">
    <property type="entry name" value="5-hydroxytryptamine receptor 4"/>
    <property type="match status" value="1"/>
</dbReference>
<dbReference type="Gene3D" id="1.20.1070.10">
    <property type="entry name" value="Rhodopsin 7-helix transmembrane proteins"/>
    <property type="match status" value="1"/>
</dbReference>
<dbReference type="InterPro" id="IPR001520">
    <property type="entry name" value="5HT4_rcpt"/>
</dbReference>
<dbReference type="InterPro" id="IPR000276">
    <property type="entry name" value="GPCR_Rhodpsn"/>
</dbReference>
<dbReference type="InterPro" id="IPR017452">
    <property type="entry name" value="GPCR_Rhodpsn_7TM"/>
</dbReference>
<dbReference type="PANTHER" id="PTHR24248">
    <property type="entry name" value="ADRENERGIC RECEPTOR-RELATED G-PROTEIN COUPLED RECEPTOR"/>
    <property type="match status" value="1"/>
</dbReference>
<dbReference type="PANTHER" id="PTHR24248:SF66">
    <property type="entry name" value="OCTOPAMINE RECEPTOR BETA-3R"/>
    <property type="match status" value="1"/>
</dbReference>
<dbReference type="Pfam" id="PF00001">
    <property type="entry name" value="7tm_1"/>
    <property type="match status" value="1"/>
</dbReference>
<dbReference type="PRINTS" id="PR01059">
    <property type="entry name" value="5HT4RECEPTR"/>
</dbReference>
<dbReference type="PRINTS" id="PR00237">
    <property type="entry name" value="GPCRRHODOPSN"/>
</dbReference>
<dbReference type="SMART" id="SM01381">
    <property type="entry name" value="7TM_GPCR_Srsx"/>
    <property type="match status" value="1"/>
</dbReference>
<dbReference type="SUPFAM" id="SSF81321">
    <property type="entry name" value="Family A G protein-coupled receptor-like"/>
    <property type="match status" value="1"/>
</dbReference>
<dbReference type="PROSITE" id="PS00237">
    <property type="entry name" value="G_PROTEIN_RECEP_F1_1"/>
    <property type="match status" value="1"/>
</dbReference>
<dbReference type="PROSITE" id="PS50262">
    <property type="entry name" value="G_PROTEIN_RECEP_F1_2"/>
    <property type="match status" value="1"/>
</dbReference>
<accession>Q13639</accession>
<accession>C4WYH4</accession>
<accession>Q546Q1</accession>
<accession>Q684M0</accession>
<accession>Q712M9</accession>
<accession>Q96KH9</accession>
<accession>Q96KI0</accession>
<accession>Q9H199</accession>
<accession>Q9NY73</accession>
<accession>Q9UBM6</accession>
<accession>Q9UBT4</accession>
<accession>Q9UE22</accession>
<accession>Q9UE23</accession>
<accession>Q9UQR6</accession>
<sequence length="388" mass="43761">MDKLDANVSSEEGFGSVEKVVLLTFLSTVILMAILGNLLVMVAVCWDRQLRKIKTNYFIVSLAFADLLVSVLVMPFGAIELVQDIWIYGEVFCLVRTSLDVLLTTASIFHLCCISLDRYYAICCQPLVYRNKMTPLRIALMLGGCWVIPTFISFLPIMQGWNNIGIIDLIEKRKFNQNSNSTYCVFMVNKPYAITCSVVAFYIPFLLMVLAYYRIYVTAKEHAHQIQMLQRAGASSESRPQSADQHSTHRMRTETKAAKTLCIIMGCFCLCWAPFFVTNIVDPFIDYTVPGQVWTAFLWLGYINSGLNPFLYAFLNKSFRRAFLIILCCDDERYRRPSILGQTVPCSTTTINGSTHVLRDAVECGGQWESQCHPPATSPLVAAQPSDT</sequence>
<feature type="chain" id="PRO_0000068965" description="5-hydroxytryptamine receptor 4">
    <location>
        <begin position="1"/>
        <end position="388"/>
    </location>
</feature>
<feature type="topological domain" description="Extracellular" evidence="9 15 16 17">
    <location>
        <begin position="1"/>
        <end position="19"/>
    </location>
</feature>
<feature type="transmembrane region" description="Helical; Name=1" evidence="9 15 16 17">
    <location>
        <begin position="20"/>
        <end position="44"/>
    </location>
</feature>
<feature type="topological domain" description="Cytoplasmic" evidence="9 15 16 17">
    <location>
        <begin position="45"/>
        <end position="54"/>
    </location>
</feature>
<feature type="transmembrane region" description="Helical; Name=2" evidence="9 15 16 17">
    <location>
        <begin position="55"/>
        <end position="78"/>
    </location>
</feature>
<feature type="topological domain" description="Extracellular" evidence="9 15 16 17">
    <location>
        <begin position="79"/>
        <end position="92"/>
    </location>
</feature>
<feature type="transmembrane region" description="Helical; Name=3" evidence="9 15 16 17">
    <location>
        <begin position="93"/>
        <end position="117"/>
    </location>
</feature>
<feature type="topological domain" description="Cytoplasmic" evidence="9 15 16 17">
    <location>
        <begin position="118"/>
        <end position="133"/>
    </location>
</feature>
<feature type="transmembrane region" description="Helical; Name=4" evidence="9 15 16 17">
    <location>
        <begin position="134"/>
        <end position="157"/>
    </location>
</feature>
<feature type="topological domain" description="Extracellular" evidence="9 15 16 17">
    <location>
        <begin position="158"/>
        <end position="188"/>
    </location>
</feature>
<feature type="transmembrane region" description="Helical; Name=5" evidence="9 15 16 17">
    <location>
        <begin position="189"/>
        <end position="212"/>
    </location>
</feature>
<feature type="topological domain" description="Cytoplasmic" evidence="9 15 16 17">
    <location>
        <begin position="213"/>
        <end position="257"/>
    </location>
</feature>
<feature type="transmembrane region" description="Helical; Name=6" evidence="9 15 16 17">
    <location>
        <begin position="258"/>
        <end position="283"/>
    </location>
</feature>
<feature type="topological domain" description="Extracellular" evidence="9 15 16 17">
    <location>
        <begin position="284"/>
        <end position="290"/>
    </location>
</feature>
<feature type="transmembrane region" description="Helical; Name=7" evidence="9 15 16 17">
    <location>
        <begin position="291"/>
        <end position="314"/>
    </location>
</feature>
<feature type="topological domain" description="Cytoplasmic" evidence="9 15 16 17">
    <location>
        <begin position="315"/>
        <end position="388"/>
    </location>
</feature>
<feature type="binding site" evidence="9 15">
    <location>
        <position position="100"/>
    </location>
    <ligand>
        <name>serotonin</name>
        <dbReference type="ChEBI" id="CHEBI:350546"/>
    </ligand>
</feature>
<feature type="binding site" evidence="9 15">
    <location>
        <position position="279"/>
    </location>
    <ligand>
        <name>serotonin</name>
        <dbReference type="ChEBI" id="CHEBI:350546"/>
    </ligand>
</feature>
<feature type="glycosylation site" description="N-linked (GlcNAc...) asparagine" evidence="2">
    <location>
        <position position="7"/>
    </location>
</feature>
<feature type="disulfide bond" evidence="3 9 15 16 17">
    <location>
        <begin position="93"/>
        <end position="184"/>
    </location>
</feature>
<feature type="splice variant" id="VSP_001845" description="In isoform 5-HT4(F)." evidence="13">
    <original>L</original>
    <variation>LERSLNQGLGQDFHA</variation>
    <location>
        <position position="169"/>
    </location>
</feature>
<feature type="splice variant" id="VSP_001847" description="In isoform 5-HT4(D)." evidence="13">
    <original>RDAVECGGQWESQCHPPATSPLVAAQPSDT</original>
    <variation>SSGTETDRRNFGIRKRRLTKPS</variation>
    <location>
        <begin position="359"/>
        <end position="388"/>
    </location>
</feature>
<feature type="splice variant" id="VSP_001846" description="In isoform 5-HT4(E)." evidence="13">
    <original>RDAVECGGQWESQCHPPATSPLVAAQPSDT</original>
    <variation>SGCSPVSSFLLLFCNRPVPV</variation>
    <location>
        <begin position="359"/>
        <end position="388"/>
    </location>
</feature>
<feature type="splice variant" id="VSP_047862" description="In isoform 5-HT4c1." evidence="12">
    <original>RDAVECGGQWESQCHPPATSPLVAAQPSDT</original>
    <variation>SSGTETDRKKLWNKEEKIDQTIQMPKRKRKKKASLSYEDLILLGRKSCFREGK</variation>
    <location>
        <begin position="359"/>
        <end position="388"/>
    </location>
</feature>
<feature type="splice variant" id="VSP_043316" description="In isoform 5-HT4(I)." evidence="13">
    <original>R</original>
    <variation>RTDFLFDRDILARYWTKPARAGPFSGTLSIRCLTARKPVLG</variation>
    <location>
        <position position="359"/>
    </location>
</feature>
<feature type="splice variant" id="VSP_001849" description="In isoform 5-HT4(A)." evidence="13">
    <original>DAVECGGQWESQCHPPATSPLVAAQPSDT</original>
    <variation>YTVLHRGHHQELEKLPIHNDPESLESCF</variation>
    <location>
        <begin position="360"/>
        <end position="388"/>
    </location>
</feature>
<feature type="splice variant" id="VSP_001848" description="In isoform 5-HT4(C)." evidence="13">
    <original>DAVECGGQWESQCHPPATSPLVAAQPSDT</original>
    <variation>F</variation>
    <location>
        <begin position="360"/>
        <end position="388"/>
    </location>
</feature>
<feature type="splice variant" id="VSP_001850" description="In isoform 5-HT4(G)." evidence="13">
    <location>
        <begin position="360"/>
        <end position="388"/>
    </location>
</feature>
<feature type="sequence variant" id="VAR_067412" description="In a patient with diffuse leukoencephalopathy with spheroids; uncertain significance; dbSNP:rs199508638." evidence="8">
    <original>S</original>
    <variation>L</variation>
    <location>
        <position position="27"/>
    </location>
</feature>
<feature type="sequence variant" id="VAR_049364" description="In dbSNP:rs34826744.">
    <original>C</original>
    <variation>Y</variation>
    <location>
        <position position="372"/>
    </location>
</feature>
<feature type="mutagenesis site" description="Abolished G-protein coupled receptor activity." evidence="9">
    <original>D</original>
    <variation>A</variation>
    <location>
        <position position="100"/>
    </location>
</feature>
<feature type="mutagenesis site" description="In D3.32N mutant; abolihed binding to serotonin." evidence="4">
    <original>D</original>
    <variation>N</variation>
    <location>
        <position position="100"/>
    </location>
</feature>
<feature type="mutagenesis site" description="Decreased G-protein coupled receptor activity." evidence="9">
    <original>T</original>
    <variation>A</variation>
    <location>
        <position position="104"/>
    </location>
</feature>
<feature type="mutagenesis site" description="Abolished G-protein coupled receptor activity." evidence="9">
    <original>T</original>
    <variation>A</variation>
    <location>
        <position position="105"/>
    </location>
</feature>
<feature type="mutagenesis site" description="Decreased G-protein coupled receptor activity." evidence="9">
    <original>F</original>
    <variation>A</variation>
    <location>
        <position position="186"/>
    </location>
</feature>
<feature type="mutagenesis site" description="Decreased G-protein coupled receptor activity." evidence="9">
    <original>A</original>
    <variation>F</variation>
    <variation>V</variation>
    <location>
        <position position="193"/>
    </location>
</feature>
<feature type="mutagenesis site" description="In S5.43A mutant; abolihed binding to serotonin." evidence="4">
    <original>S</original>
    <variation>A</variation>
    <location>
        <position position="197"/>
    </location>
</feature>
<feature type="mutagenesis site" description="Abolished G-protein coupled receptor activity." evidence="9">
    <original>W</original>
    <variation>A</variation>
    <location>
        <position position="272"/>
    </location>
</feature>
<feature type="mutagenesis site" description="Abolished G-protein coupled receptor activity." evidence="9">
    <location>
        <position position="275"/>
    </location>
</feature>
<feature type="mutagenesis site" description="In Y7.43A mutant; abolihed binding to serotonin. Abolished G-protein coupled receptor activity." evidence="4 9">
    <original>Y</original>
    <variation>A</variation>
    <location>
        <position position="302"/>
    </location>
</feature>
<feature type="helix" evidence="18">
    <location>
        <begin position="22"/>
        <end position="46"/>
    </location>
</feature>
<feature type="helix" evidence="18">
    <location>
        <begin position="48"/>
        <end position="51"/>
    </location>
</feature>
<feature type="helix" evidence="18">
    <location>
        <begin position="55"/>
        <end position="72"/>
    </location>
</feature>
<feature type="helix" evidence="18">
    <location>
        <begin position="74"/>
        <end position="83"/>
    </location>
</feature>
<feature type="helix" evidence="18">
    <location>
        <begin position="89"/>
        <end position="123"/>
    </location>
</feature>
<feature type="helix" evidence="19">
    <location>
        <begin position="126"/>
        <end position="128"/>
    </location>
</feature>
<feature type="helix" evidence="18">
    <location>
        <begin position="129"/>
        <end position="132"/>
    </location>
</feature>
<feature type="helix" evidence="18">
    <location>
        <begin position="135"/>
        <end position="158"/>
    </location>
</feature>
<feature type="turn" evidence="18">
    <location>
        <begin position="159"/>
        <end position="165"/>
    </location>
</feature>
<feature type="helix" evidence="18">
    <location>
        <begin position="167"/>
        <end position="174"/>
    </location>
</feature>
<feature type="helix" evidence="18">
    <location>
        <begin position="190"/>
        <end position="200"/>
    </location>
</feature>
<feature type="helix" evidence="18">
    <location>
        <begin position="202"/>
        <end position="232"/>
    </location>
</feature>
<feature type="helix" evidence="18">
    <location>
        <begin position="255"/>
        <end position="284"/>
    </location>
</feature>
<feature type="turn" evidence="18">
    <location>
        <begin position="285"/>
        <end position="287"/>
    </location>
</feature>
<feature type="helix" evidence="18">
    <location>
        <begin position="291"/>
        <end position="312"/>
    </location>
</feature>
<feature type="turn" evidence="18">
    <location>
        <begin position="313"/>
        <end position="315"/>
    </location>
</feature>
<feature type="helix" evidence="18">
    <location>
        <begin position="317"/>
        <end position="328"/>
    </location>
</feature>
<organism>
    <name type="scientific">Homo sapiens</name>
    <name type="common">Human</name>
    <dbReference type="NCBI Taxonomy" id="9606"/>
    <lineage>
        <taxon>Eukaryota</taxon>
        <taxon>Metazoa</taxon>
        <taxon>Chordata</taxon>
        <taxon>Craniata</taxon>
        <taxon>Vertebrata</taxon>
        <taxon>Euteleostomi</taxon>
        <taxon>Mammalia</taxon>
        <taxon>Eutheria</taxon>
        <taxon>Euarchontoglires</taxon>
        <taxon>Primates</taxon>
        <taxon>Haplorrhini</taxon>
        <taxon>Catarrhini</taxon>
        <taxon>Hominidae</taxon>
        <taxon>Homo</taxon>
    </lineage>
</organism>
<comment type="function">
    <text evidence="4 6 9 10">G-protein coupled receptor for 5-hydroxytryptamine (serotonin), a biogenic hormone that functions as a neurotransmitter, a hormone and a mitogen (PubMed:10821780, PubMed:16102731, PubMed:35714614, PubMed:9603189). Ligand binding causes a conformation change that triggers signaling via guanine nucleotide-binding proteins (G proteins) and modulates the activity of downstream effectors (PubMed:16102731, PubMed:35714614). HTR4 is coupled to G(s) G alpha proteins and mediates activation of adenylate cyclase activity (PubMed:16102731, PubMed:35714614).</text>
</comment>
<comment type="subunit">
    <text evidence="7">Interacts (via C-terminus 330-346 AA) with GRK5; this interaction is promoted by 5-HT (serotonin).</text>
</comment>
<comment type="subunit">
    <molecule>Isoform 5-HT4(A)</molecule>
    <text evidence="1">Interacts with MAGI2, MPP3, NHERF1 and SNX27 isoforms 1 and 2 (By similarity). Forms a complex including NHERF1 and EZR (By similarity).</text>
</comment>
<comment type="subunit">
    <molecule>Isoform 5-HT4(E)</molecule>
    <text evidence="1">Interacts with PATJ, NOS1 and SEC23A.</text>
</comment>
<comment type="interaction">
    <interactant intactId="EBI-6656425">
        <id>Q13639</id>
    </interactant>
    <interactant intactId="EBI-15639515">
        <id>O15354</id>
        <label>GPR37</label>
    </interactant>
    <organismsDiffer>false</organismsDiffer>
    <experiments>5</experiments>
</comment>
<comment type="interaction">
    <interactant intactId="EBI-6656425">
        <id>Q13639</id>
    </interactant>
    <interactant intactId="EBI-740397">
        <id>O60269</id>
        <label>GPRIN2</label>
    </interactant>
    <organismsDiffer>false</organismsDiffer>
    <experiments>2</experiments>
</comment>
<comment type="subcellular location">
    <subcellularLocation>
        <location evidence="4">Cell membrane</location>
        <topology evidence="9">Multi-pass membrane protein</topology>
    </subcellularLocation>
    <subcellularLocation>
        <location evidence="1">Endosome membrane</location>
        <topology evidence="9">Multi-pass membrane protein</topology>
    </subcellularLocation>
    <text evidence="1">Interaction with SNX27 mediates recruitment to early endosomes, while interaction with NHERF1 and EZR might target the protein to specialized subcellular regions, such as microvilli.</text>
</comment>
<comment type="alternative products">
    <event type="alternative splicing"/>
    <isoform>
        <id>Q13639-1</id>
        <name>5-HT4(B)</name>
        <sequence type="displayed"/>
    </isoform>
    <isoform>
        <id>Q13639-2</id>
        <name>5-HT4(A)</name>
        <name>5-HT4S</name>
        <sequence type="described" ref="VSP_001849"/>
    </isoform>
    <isoform>
        <id>Q13639-3</id>
        <name>5-HT4(C)</name>
        <sequence type="described" ref="VSP_001848"/>
    </isoform>
    <isoform>
        <id>Q13639-4</id>
        <name>5-HT4(D)</name>
        <sequence type="described" ref="VSP_001847"/>
    </isoform>
    <isoform>
        <id>Q13639-5</id>
        <name>5-HT4(E)</name>
        <name>H5-HT4(g)</name>
        <sequence type="described" ref="VSP_001846"/>
    </isoform>
    <isoform>
        <id>Q13639-6</id>
        <name>5-HT4(F)</name>
        <sequence type="described" ref="VSP_001845"/>
    </isoform>
    <isoform>
        <id>Q13639-7</id>
        <name>5-HT4(G)</name>
        <sequence type="described" ref="VSP_001850"/>
    </isoform>
    <isoform>
        <id>Q13639-8</id>
        <name>5-HT4(I)</name>
        <sequence type="described" ref="VSP_043316"/>
    </isoform>
    <isoform>
        <id>Q13639-9</id>
        <name>5-HT4c1</name>
        <sequence type="described" ref="VSP_047862"/>
    </isoform>
    <text>Additional isoforms seem to exist.</text>
</comment>
<comment type="tissue specificity">
    <molecule>Isoform 5-HT4(A)</molecule>
    <text evidence="5">Expressed in ileum, brain, and atrium, but not in the ventricle.</text>
</comment>
<comment type="tissue specificity">
    <molecule>Isoform 5-HT4(E)</molecule>
    <text evidence="5">Mainly expressed in atria and cardiac ventricle.</text>
</comment>
<comment type="tissue specificity">
    <molecule>Isoform 5-HT4(I)</molecule>
    <text evidence="5">Expressed in all cardiovascular tissues analyzed.</text>
</comment>
<comment type="domain">
    <text evidence="9">Specificity for G(s) G alpha proteins is determined by the length of transmembrane regions 5 and 6 (TM5 and TM6).</text>
</comment>
<comment type="similarity">
    <text evidence="3">Belongs to the G-protein coupled receptor 1 family.</text>
</comment>
<evidence type="ECO:0000250" key="1">
    <source>
        <dbReference type="UniProtKB" id="P97288"/>
    </source>
</evidence>
<evidence type="ECO:0000255" key="2"/>
<evidence type="ECO:0000255" key="3">
    <source>
        <dbReference type="PROSITE-ProRule" id="PRU00521"/>
    </source>
</evidence>
<evidence type="ECO:0000269" key="4">
    <source>
    </source>
</evidence>
<evidence type="ECO:0000269" key="5">
    <source>
    </source>
</evidence>
<evidence type="ECO:0000269" key="6">
    <source>
    </source>
</evidence>
<evidence type="ECO:0000269" key="7">
    <source>
    </source>
</evidence>
<evidence type="ECO:0000269" key="8">
    <source>
    </source>
</evidence>
<evidence type="ECO:0000269" key="9">
    <source>
    </source>
</evidence>
<evidence type="ECO:0000269" key="10">
    <source>
    </source>
</evidence>
<evidence type="ECO:0000303" key="11">
    <source>
    </source>
</evidence>
<evidence type="ECO:0000303" key="12">
    <source ref="8"/>
</evidence>
<evidence type="ECO:0000305" key="13"/>
<evidence type="ECO:0000312" key="14">
    <source>
        <dbReference type="HGNC" id="HGNC:5299"/>
    </source>
</evidence>
<evidence type="ECO:0007744" key="15">
    <source>
        <dbReference type="PDB" id="7XT8"/>
    </source>
</evidence>
<evidence type="ECO:0007744" key="16">
    <source>
        <dbReference type="PDB" id="7XT9"/>
    </source>
</evidence>
<evidence type="ECO:0007744" key="17">
    <source>
        <dbReference type="PDB" id="7XTA"/>
    </source>
</evidence>
<evidence type="ECO:0007829" key="18">
    <source>
        <dbReference type="PDB" id="7XT8"/>
    </source>
</evidence>
<evidence type="ECO:0007829" key="19">
    <source>
        <dbReference type="PDB" id="7XT9"/>
    </source>
</evidence>
<keyword id="KW-0002">3D-structure</keyword>
<keyword id="KW-0025">Alternative splicing</keyword>
<keyword id="KW-1003">Cell membrane</keyword>
<keyword id="KW-1015">Disulfide bond</keyword>
<keyword id="KW-0967">Endosome</keyword>
<keyword id="KW-0297">G-protein coupled receptor</keyword>
<keyword id="KW-0325">Glycoprotein</keyword>
<keyword id="KW-0472">Membrane</keyword>
<keyword id="KW-0675">Receptor</keyword>
<keyword id="KW-1185">Reference proteome</keyword>
<keyword id="KW-0807">Transducer</keyword>
<keyword id="KW-0812">Transmembrane</keyword>
<keyword id="KW-1133">Transmembrane helix</keyword>
<gene>
    <name evidence="14" type="primary">HTR4</name>
</gene>
<reference key="1">
    <citation type="journal article" date="1998" name="J. Neurochem.">
        <title>Cloning, expression, and pharmacology of four human 5-hydroxytryptamine 4 receptor isoforms produced by alternative splicing in the carboxyl terminus.</title>
        <authorList>
            <person name="Blondel O."/>
            <person name="Gastineau M."/>
            <person name="Dahmoune Y."/>
            <person name="Langlois M."/>
            <person name="Fischmeister R."/>
        </authorList>
    </citation>
    <scope>NUCLEOTIDE SEQUENCE [MRNA] (ISOFORMS 5-HT4(A); 5-HT4(B); 5-HT4(C) AND 5-HT4(D))</scope>
    <scope>FUNCTION</scope>
    <source>
        <tissue>Intestine</tissue>
    </source>
</reference>
<reference key="2">
    <citation type="submission" date="1997-06" db="EMBL/GenBank/DDBJ databases">
        <title>Cloning and expression of 5-HT4 receptor species and splice variants.</title>
        <authorList>
            <person name="Van den Wyngaert I."/>
            <person name="Gommeren W."/>
            <person name="Jurzak M."/>
            <person name="Verhasselt P."/>
            <person name="Gordon R."/>
            <person name="Leysen J."/>
            <person name="Luyten W."/>
            <person name="Bender E."/>
        </authorList>
    </citation>
    <scope>NUCLEOTIDE SEQUENCE [MRNA] (ISOFORMS 5-HT4(A) AND 5-HT4(B))</scope>
    <source>
        <tissue>Brain</tissue>
    </source>
</reference>
<reference key="3">
    <citation type="journal article" date="1997" name="NeuroReport">
        <title>Cloning and expression of human 5-HT4S receptors. Effect of receptor density on their coupling to adenylyl cyclase.</title>
        <authorList>
            <person name="Claeysen S."/>
            <person name="Faye P."/>
            <person name="Sebben M."/>
            <person name="Lemaire S."/>
            <person name="Bockaert J."/>
            <person name="Dumuis A."/>
        </authorList>
    </citation>
    <scope>NUCLEOTIDE SEQUENCE [MRNA] (ISOFORM 5-HT4(A))</scope>
    <source>
        <tissue>Heart</tissue>
    </source>
</reference>
<reference key="4">
    <citation type="submission" date="1998-12" db="EMBL/GenBank/DDBJ databases">
        <title>Molecular cloning of the human serotonin receptor 5-HT4(b) and pharmacological comparison with the cloned human 5-HT4(a) receptor.</title>
        <authorList>
            <person name="Syversveen T."/>
            <person name="Bach T."/>
            <person name="Kvingedal A.M."/>
            <person name="Krobert K.A."/>
            <person name="Kaumann A.J."/>
            <person name="Levy F.O."/>
        </authorList>
    </citation>
    <scope>NUCLEOTIDE SEQUENCE [MRNA] (ISOFORM 5-HT4(B))</scope>
</reference>
<reference key="5">
    <citation type="journal article" date="1999" name="Mol. Pharmacol.">
        <title>Novel brain-specific 5-HT4 receptor splice variants show marked constitutive activity: role of the C-terminal intracellular domain.</title>
        <authorList>
            <person name="Claeysen S."/>
            <person name="Sebben M."/>
            <person name="Becamel C."/>
            <person name="Bockaert J."/>
            <person name="Dumuis A."/>
        </authorList>
    </citation>
    <scope>NUCLEOTIDE SEQUENCE [MRNA] (ISOFORM 5-HT4(E))</scope>
    <source>
        <tissue>Brain</tissue>
    </source>
</reference>
<reference key="6">
    <citation type="journal article" date="2002" name="Neuropharmacology">
        <title>Cloning and characterization of a novel human 5-HT4 receptor variant that lacks the alternatively spliced carboxy terminal exon. RT-PCR distribution in human brain and periphery of multiple 5-HT4 receptor variants.</title>
        <authorList>
            <person name="Vilaro M.T."/>
            <person name="Domenech T."/>
            <person name="Palacios J.M."/>
            <person name="Mengod G."/>
        </authorList>
    </citation>
    <scope>NUCLEOTIDE SEQUENCE [MRNA] (ISOFORMS 5-HT4(A); 5-HT4(B); 5-HT4(E) AND 5-HT4(G))</scope>
    <source>
        <tissue>Brain</tissue>
        <tissue>Hippocampus</tissue>
    </source>
</reference>
<reference key="7">
    <citation type="journal article" date="2004" name="Naunyn Schmiedebergs Arch. Pharmacol.">
        <title>Cloning, pharmacological characterisation and tissue distribution of a novel 5-HT4 receptor splice variant, 5-HT4(i).</title>
        <authorList>
            <person name="Brattelid T."/>
            <person name="Kvingedal A.M."/>
            <person name="Krobert K.A."/>
            <person name="Andressen K.W."/>
            <person name="Bach T."/>
            <person name="Hystad M.E."/>
            <person name="Kaumann A.J."/>
            <person name="Levy F.O."/>
        </authorList>
    </citation>
    <scope>NUCLEOTIDE SEQUENCE [MRNA] (ISOFORMS 5-HT4(E) AND 5-HT4(I))</scope>
    <scope>TISSUE SPECIFICITY</scope>
</reference>
<reference key="8">
    <citation type="submission" date="2007-05" db="EMBL/GenBank/DDBJ databases">
        <title>Cloning, expression and characterisation of a novel rat 5-HT4 receptor splice variant (5-HT4c1).</title>
        <authorList>
            <person name="Reid A.M."/>
            <person name="Kelsell R.E."/>
            <person name="Houp J.A."/>
            <person name="Kelly F.M."/>
            <person name="Medhurst A.D."/>
            <person name="Cox H.M."/>
            <person name="Calver A.R."/>
        </authorList>
    </citation>
    <scope>NUCLEOTIDE SEQUENCE [MRNA] (ISOFORM 5-HT4C1)</scope>
    <source>
        <tissue>Small intestine</tissue>
    </source>
</reference>
<reference key="9">
    <citation type="journal article" date="2004" name="Nature">
        <title>The DNA sequence and comparative analysis of human chromosome 5.</title>
        <authorList>
            <person name="Schmutz J."/>
            <person name="Martin J."/>
            <person name="Terry A."/>
            <person name="Couronne O."/>
            <person name="Grimwood J."/>
            <person name="Lowry S."/>
            <person name="Gordon L.A."/>
            <person name="Scott D."/>
            <person name="Xie G."/>
            <person name="Huang W."/>
            <person name="Hellsten U."/>
            <person name="Tran-Gyamfi M."/>
            <person name="She X."/>
            <person name="Prabhakar S."/>
            <person name="Aerts A."/>
            <person name="Altherr M."/>
            <person name="Bajorek E."/>
            <person name="Black S."/>
            <person name="Branscomb E."/>
            <person name="Caoile C."/>
            <person name="Challacombe J.F."/>
            <person name="Chan Y.M."/>
            <person name="Denys M."/>
            <person name="Detter J.C."/>
            <person name="Escobar J."/>
            <person name="Flowers D."/>
            <person name="Fotopulos D."/>
            <person name="Glavina T."/>
            <person name="Gomez M."/>
            <person name="Gonzales E."/>
            <person name="Goodstein D."/>
            <person name="Grigoriev I."/>
            <person name="Groza M."/>
            <person name="Hammon N."/>
            <person name="Hawkins T."/>
            <person name="Haydu L."/>
            <person name="Israni S."/>
            <person name="Jett J."/>
            <person name="Kadner K."/>
            <person name="Kimball H."/>
            <person name="Kobayashi A."/>
            <person name="Lopez F."/>
            <person name="Lou Y."/>
            <person name="Martinez D."/>
            <person name="Medina C."/>
            <person name="Morgan J."/>
            <person name="Nandkeshwar R."/>
            <person name="Noonan J.P."/>
            <person name="Pitluck S."/>
            <person name="Pollard M."/>
            <person name="Predki P."/>
            <person name="Priest J."/>
            <person name="Ramirez L."/>
            <person name="Retterer J."/>
            <person name="Rodriguez A."/>
            <person name="Rogers S."/>
            <person name="Salamov A."/>
            <person name="Salazar A."/>
            <person name="Thayer N."/>
            <person name="Tice H."/>
            <person name="Tsai M."/>
            <person name="Ustaszewska A."/>
            <person name="Vo N."/>
            <person name="Wheeler J."/>
            <person name="Wu K."/>
            <person name="Yang J."/>
            <person name="Dickson M."/>
            <person name="Cheng J.-F."/>
            <person name="Eichler E.E."/>
            <person name="Olsen A."/>
            <person name="Pennacchio L.A."/>
            <person name="Rokhsar D.S."/>
            <person name="Richardson P."/>
            <person name="Lucas S.M."/>
            <person name="Myers R.M."/>
            <person name="Rubin E.M."/>
        </authorList>
    </citation>
    <scope>NUCLEOTIDE SEQUENCE [LARGE SCALE GENOMIC DNA]</scope>
</reference>
<reference key="10">
    <citation type="submission" date="2005-09" db="EMBL/GenBank/DDBJ databases">
        <authorList>
            <person name="Mural R.J."/>
            <person name="Istrail S."/>
            <person name="Sutton G."/>
            <person name="Florea L."/>
            <person name="Halpern A.L."/>
            <person name="Mobarry C.M."/>
            <person name="Lippert R."/>
            <person name="Walenz B."/>
            <person name="Shatkay H."/>
            <person name="Dew I."/>
            <person name="Miller J.R."/>
            <person name="Flanigan M.J."/>
            <person name="Edwards N.J."/>
            <person name="Bolanos R."/>
            <person name="Fasulo D."/>
            <person name="Halldorsson B.V."/>
            <person name="Hannenhalli S."/>
            <person name="Turner R."/>
            <person name="Yooseph S."/>
            <person name="Lu F."/>
            <person name="Nusskern D.R."/>
            <person name="Shue B.C."/>
            <person name="Zheng X.H."/>
            <person name="Zhong F."/>
            <person name="Delcher A.L."/>
            <person name="Huson D.H."/>
            <person name="Kravitz S.A."/>
            <person name="Mouchard L."/>
            <person name="Reinert K."/>
            <person name="Remington K.A."/>
            <person name="Clark A.G."/>
            <person name="Waterman M.S."/>
            <person name="Eichler E.E."/>
            <person name="Adams M.D."/>
            <person name="Hunkapiller M.W."/>
            <person name="Myers E.W."/>
            <person name="Venter J.C."/>
        </authorList>
    </citation>
    <scope>NUCLEOTIDE SEQUENCE [LARGE SCALE GENOMIC DNA]</scope>
</reference>
<reference key="11">
    <citation type="journal article" date="2004" name="Genome Res.">
        <title>The status, quality, and expansion of the NIH full-length cDNA project: the Mammalian Gene Collection (MGC).</title>
        <authorList>
            <consortium name="The MGC Project Team"/>
        </authorList>
    </citation>
    <scope>NUCLEOTIDE SEQUENCE [LARGE SCALE MRNA] (ISOFORM 5-HT4(B))</scope>
</reference>
<reference key="12">
    <citation type="journal article" date="2000" name="J. Neurochem.">
        <title>Structure of the human serotonin 5-HT4 receptor gene and cloning of a novel 5-HT4 splice variant.</title>
        <authorList>
            <person name="Bender E."/>
            <person name="Pindon A."/>
            <person name="van Oers I."/>
            <person name="Zhang Y.B."/>
            <person name="Gommeren W."/>
            <person name="Verhasselt P."/>
            <person name="Jurzak M."/>
            <person name="Leysen J."/>
            <person name="Luyten W."/>
        </authorList>
    </citation>
    <scope>NUCLEOTIDE SEQUENCE [GENOMIC DNA] OF 10-388 (ISOFORM 5-HT4(F))</scope>
</reference>
<reference key="13">
    <citation type="journal article" date="1995" name="FEBS Lett.">
        <title>Expression of serotonin receptor mRNAs in blood vessels.</title>
        <authorList>
            <person name="Ullmer C."/>
            <person name="Schmuck K."/>
            <person name="Kalkman H.O."/>
            <person name="Luebbert H."/>
        </authorList>
    </citation>
    <scope>NUCLEOTIDE SEQUENCE [MRNA] OF 112-255</scope>
    <source>
        <tissue>Brain</tissue>
    </source>
</reference>
<reference key="14">
    <citation type="journal article" date="2000" name="Br. J. Pharmacol.">
        <title>Exploration of the ligand binding site of the human 5-HT(4) receptor by site-directed mutagenesis and molecular modeling.</title>
        <authorList>
            <person name="Mialet J."/>
            <person name="Dahmoune Y."/>
            <person name="Lezoualc'h F."/>
            <person name="Berque-Bestel I."/>
            <person name="Eftekhari P."/>
            <person name="Hoebeke J."/>
            <person name="Sicsic S."/>
            <person name="Langlois M."/>
            <person name="Fischmeister R."/>
        </authorList>
    </citation>
    <scope>FUNCTION</scope>
    <scope>SUBCELLULAR LOCATION</scope>
    <scope>MUTAGENESIS OF ASP-100; SER-197 AND TYR-302</scope>
</reference>
<reference key="15">
    <citation type="journal article" date="2005" name="Biochem. Pharmacol.">
        <title>A high-affinity monoclonal antibody with functional activity against the 5-hydroxytryptaminergic (5-HT4) receptor.</title>
        <authorList>
            <person name="Kamel R."/>
            <person name="Eftekhari P."/>
            <person name="Garcia S."/>
            <person name="Berthouze M."/>
            <person name="Berque-Bestel I."/>
            <person name="Peter J.C."/>
            <person name="Lezoualc'h F."/>
            <person name="Hoebeke J."/>
        </authorList>
    </citation>
    <scope>FUNCTION</scope>
</reference>
<reference key="16">
    <citation type="journal article" date="2009" name="EMBO J.">
        <title>Beta-arrestin1 phosphorylation by GRK5 regulates G protein-independent 5-HT4 receptor signalling.</title>
        <authorList>
            <person name="Barthet G."/>
            <person name="Carrat G."/>
            <person name="Cassier E."/>
            <person name="Barker B."/>
            <person name="Gaven F."/>
            <person name="Pillot M."/>
            <person name="Framery B."/>
            <person name="Pellissier L.P."/>
            <person name="Augier J."/>
            <person name="Kang D.S."/>
            <person name="Claeysen S."/>
            <person name="Reiter E."/>
            <person name="Baneres J.L."/>
            <person name="Benovic J.L."/>
            <person name="Marin P."/>
            <person name="Bockaert J."/>
            <person name="Dumuis A."/>
        </authorList>
    </citation>
    <scope>INTERACTION WITH GRK5</scope>
    <scope>IDENTIFICATION BY MASS SPECTROMETRY</scope>
</reference>
<reference evidence="15 16 17" key="17">
    <citation type="journal article" date="2022" name="Mol. Cell">
        <title>GPCRs steer Gi and Gs selectivity via TM5-TM6 switches as revealed by structures of serotonin receptors.</title>
        <authorList>
            <person name="Huang S."/>
            <person name="Xu P."/>
            <person name="Shen D.D."/>
            <person name="Simon I.A."/>
            <person name="Mao C."/>
            <person name="Tan Y."/>
            <person name="Zhang H."/>
            <person name="Harpsoee K."/>
            <person name="Li H."/>
            <person name="Zhang Y."/>
            <person name="You C."/>
            <person name="Yu X."/>
            <person name="Jiang Y."/>
            <person name="Zhang Y."/>
            <person name="Gloriam D.E."/>
            <person name="Xu H.E."/>
        </authorList>
    </citation>
    <scope>STRUCTURE BY ELECTRON MICROSCOPY (3.1 ANGSTROMS) OF 2-388 IN COMPLEX WITH SEROTONIN; GNB1; GNB2 AND GNAS2</scope>
    <scope>FUNCTION</scope>
    <scope>DOMAIN</scope>
    <scope>MUTAGENESIS OF ASP-100; THR-104; THR-105; PHE-186; ALA-193; TRP-272; PHE-275 AND TYR-302</scope>
</reference>
<reference key="18">
    <citation type="journal article" date="2012" name="Nat. Genet.">
        <title>Mutations in the colony stimulating factor 1 receptor (CSF1R) gene cause hereditary diffuse leukoencephalopathy with spheroids.</title>
        <authorList>
            <person name="Rademakers R."/>
            <person name="Baker M."/>
            <person name="Nicholson A.M."/>
            <person name="Rutherford N.J."/>
            <person name="Finch N."/>
            <person name="Soto-Ortolaza A."/>
            <person name="Lash J."/>
            <person name="Wider C."/>
            <person name="Wojtas A."/>
            <person name="DeJesus-Hernandez M."/>
            <person name="Adamson J."/>
            <person name="Kouri N."/>
            <person name="Sundal C."/>
            <person name="Shuster E.A."/>
            <person name="Aasly J."/>
            <person name="MacKenzie J."/>
            <person name="Roeber S."/>
            <person name="Kretzschmar H.A."/>
            <person name="Boeve B.F."/>
            <person name="Knopman D.S."/>
            <person name="Petersen R.C."/>
            <person name="Cairns N.J."/>
            <person name="Ghetti B."/>
            <person name="Spina S."/>
            <person name="Garbern J."/>
            <person name="Tselis A.C."/>
            <person name="Uitti R."/>
            <person name="Das P."/>
            <person name="Van Gerpen J.A."/>
            <person name="Meschia J.F."/>
            <person name="Levy S."/>
            <person name="Broderick D.F."/>
            <person name="Graff-Radford N."/>
            <person name="Ross O.A."/>
            <person name="Miller B.B."/>
            <person name="Swerdlow R.H."/>
            <person name="Dickson D.W."/>
            <person name="Wszolek Z.K."/>
        </authorList>
    </citation>
    <scope>VARIANT LEU-27</scope>
</reference>
<protein>
    <recommendedName>
        <fullName evidence="13">5-hydroxytryptamine receptor 4</fullName>
        <shortName evidence="11">5-HT-4</shortName>
        <shortName evidence="11">5-HT4</shortName>
    </recommendedName>
    <alternativeName>
        <fullName evidence="11">Serotonin receptor 4</fullName>
    </alternativeName>
</protein>